<proteinExistence type="inferred from homology"/>
<protein>
    <recommendedName>
        <fullName evidence="1">Large ribosomal subunit protein uL22</fullName>
    </recommendedName>
    <alternativeName>
        <fullName evidence="2">50S ribosomal protein L22</fullName>
    </alternativeName>
</protein>
<feature type="chain" id="PRO_1000142251" description="Large ribosomal subunit protein uL22">
    <location>
        <begin position="1"/>
        <end position="108"/>
    </location>
</feature>
<organism>
    <name type="scientific">Desulfatibacillum aliphaticivorans</name>
    <dbReference type="NCBI Taxonomy" id="218208"/>
    <lineage>
        <taxon>Bacteria</taxon>
        <taxon>Pseudomonadati</taxon>
        <taxon>Thermodesulfobacteriota</taxon>
        <taxon>Desulfobacteria</taxon>
        <taxon>Desulfobacterales</taxon>
        <taxon>Desulfatibacillaceae</taxon>
        <taxon>Desulfatibacillum</taxon>
    </lineage>
</organism>
<dbReference type="EMBL" id="CP001322">
    <property type="protein sequence ID" value="ACL03607.1"/>
    <property type="molecule type" value="Genomic_DNA"/>
</dbReference>
<dbReference type="RefSeq" id="WP_012611038.1">
    <property type="nucleotide sequence ID" value="NC_011768.1"/>
</dbReference>
<dbReference type="SMR" id="B8FET0"/>
<dbReference type="KEGG" id="dal:Dalk_1910"/>
<dbReference type="eggNOG" id="COG0091">
    <property type="taxonomic scope" value="Bacteria"/>
</dbReference>
<dbReference type="HOGENOM" id="CLU_083987_3_3_7"/>
<dbReference type="Proteomes" id="UP000000739">
    <property type="component" value="Chromosome"/>
</dbReference>
<dbReference type="GO" id="GO:0022625">
    <property type="term" value="C:cytosolic large ribosomal subunit"/>
    <property type="evidence" value="ECO:0007669"/>
    <property type="project" value="TreeGrafter"/>
</dbReference>
<dbReference type="GO" id="GO:0019843">
    <property type="term" value="F:rRNA binding"/>
    <property type="evidence" value="ECO:0007669"/>
    <property type="project" value="UniProtKB-UniRule"/>
</dbReference>
<dbReference type="GO" id="GO:0003735">
    <property type="term" value="F:structural constituent of ribosome"/>
    <property type="evidence" value="ECO:0007669"/>
    <property type="project" value="InterPro"/>
</dbReference>
<dbReference type="GO" id="GO:0006412">
    <property type="term" value="P:translation"/>
    <property type="evidence" value="ECO:0007669"/>
    <property type="project" value="UniProtKB-UniRule"/>
</dbReference>
<dbReference type="CDD" id="cd00336">
    <property type="entry name" value="Ribosomal_L22"/>
    <property type="match status" value="1"/>
</dbReference>
<dbReference type="Gene3D" id="3.90.470.10">
    <property type="entry name" value="Ribosomal protein L22/L17"/>
    <property type="match status" value="1"/>
</dbReference>
<dbReference type="HAMAP" id="MF_01331_B">
    <property type="entry name" value="Ribosomal_uL22_B"/>
    <property type="match status" value="1"/>
</dbReference>
<dbReference type="InterPro" id="IPR001063">
    <property type="entry name" value="Ribosomal_uL22"/>
</dbReference>
<dbReference type="InterPro" id="IPR005727">
    <property type="entry name" value="Ribosomal_uL22_bac/chlpt-type"/>
</dbReference>
<dbReference type="InterPro" id="IPR047867">
    <property type="entry name" value="Ribosomal_uL22_bac/org-type"/>
</dbReference>
<dbReference type="InterPro" id="IPR018260">
    <property type="entry name" value="Ribosomal_uL22_CS"/>
</dbReference>
<dbReference type="InterPro" id="IPR036394">
    <property type="entry name" value="Ribosomal_uL22_sf"/>
</dbReference>
<dbReference type="NCBIfam" id="TIGR01044">
    <property type="entry name" value="rplV_bact"/>
    <property type="match status" value="1"/>
</dbReference>
<dbReference type="PANTHER" id="PTHR13501">
    <property type="entry name" value="CHLOROPLAST 50S RIBOSOMAL PROTEIN L22-RELATED"/>
    <property type="match status" value="1"/>
</dbReference>
<dbReference type="PANTHER" id="PTHR13501:SF8">
    <property type="entry name" value="LARGE RIBOSOMAL SUBUNIT PROTEIN UL22M"/>
    <property type="match status" value="1"/>
</dbReference>
<dbReference type="Pfam" id="PF00237">
    <property type="entry name" value="Ribosomal_L22"/>
    <property type="match status" value="1"/>
</dbReference>
<dbReference type="SUPFAM" id="SSF54843">
    <property type="entry name" value="Ribosomal protein L22"/>
    <property type="match status" value="1"/>
</dbReference>
<dbReference type="PROSITE" id="PS00464">
    <property type="entry name" value="RIBOSOMAL_L22"/>
    <property type="match status" value="1"/>
</dbReference>
<reference key="1">
    <citation type="journal article" date="2012" name="Environ. Microbiol.">
        <title>The genome sequence of Desulfatibacillum alkenivorans AK-01: a blueprint for anaerobic alkane oxidation.</title>
        <authorList>
            <person name="Callaghan A.V."/>
            <person name="Morris B.E."/>
            <person name="Pereira I.A."/>
            <person name="McInerney M.J."/>
            <person name="Austin R.N."/>
            <person name="Groves J.T."/>
            <person name="Kukor J.J."/>
            <person name="Suflita J.M."/>
            <person name="Young L.Y."/>
            <person name="Zylstra G.J."/>
            <person name="Wawrik B."/>
        </authorList>
    </citation>
    <scope>NUCLEOTIDE SEQUENCE [LARGE SCALE GENOMIC DNA]</scope>
    <source>
        <strain>AK-01</strain>
    </source>
</reference>
<comment type="function">
    <text evidence="1">This protein binds specifically to 23S rRNA; its binding is stimulated by other ribosomal proteins, e.g. L4, L17, and L20. It is important during the early stages of 50S assembly. It makes multiple contacts with different domains of the 23S rRNA in the assembled 50S subunit and ribosome (By similarity).</text>
</comment>
<comment type="function">
    <text evidence="1">The globular domain of the protein is located near the polypeptide exit tunnel on the outside of the subunit, while an extended beta-hairpin is found that lines the wall of the exit tunnel in the center of the 70S ribosome.</text>
</comment>
<comment type="subunit">
    <text evidence="1">Part of the 50S ribosomal subunit.</text>
</comment>
<comment type="similarity">
    <text evidence="1">Belongs to the universal ribosomal protein uL22 family.</text>
</comment>
<keyword id="KW-1185">Reference proteome</keyword>
<keyword id="KW-0687">Ribonucleoprotein</keyword>
<keyword id="KW-0689">Ribosomal protein</keyword>
<keyword id="KW-0694">RNA-binding</keyword>
<keyword id="KW-0699">rRNA-binding</keyword>
<accession>B8FET0</accession>
<name>RL22_DESAL</name>
<evidence type="ECO:0000255" key="1">
    <source>
        <dbReference type="HAMAP-Rule" id="MF_01331"/>
    </source>
</evidence>
<evidence type="ECO:0000305" key="2"/>
<sequence length="108" mass="11649">MQVKATAKYMRVSPQKVRKVADAVKGKPVEAGLNVLQFMPQKSAAMIAKVIRSAVANAEVGGVDVDDLVIKGVIADQGPTLKRFRARAQGRGARILKRTSHITVVLEQ</sequence>
<gene>
    <name evidence="1" type="primary">rplV</name>
    <name type="ordered locus">Dalk_1910</name>
</gene>